<name>KORA2_ECOLX</name>
<geneLocation type="plasmid">
    <name>IncP-alpha RK2</name>
</geneLocation>
<keyword id="KW-0002">3D-structure</keyword>
<keyword id="KW-0238">DNA-binding</keyword>
<keyword id="KW-0614">Plasmid</keyword>
<keyword id="KW-0678">Repressor</keyword>
<keyword id="KW-0804">Transcription</keyword>
<keyword id="KW-0805">Transcription regulation</keyword>
<reference key="1">
    <citation type="journal article" date="1983" name="Nucleic Acids Res.">
        <title>Map location and nucleotide sequence of korA, a key regulatory gene of promiscuous plasmid RK2.</title>
        <authorList>
            <person name="Bechhofer D.H."/>
            <person name="Figurski D.H."/>
        </authorList>
    </citation>
    <scope>NUCLEOTIDE SEQUENCE [GENOMIC DNA]</scope>
</reference>
<reference key="2">
    <citation type="journal article" date="1986" name="Nucleic Acids Res.">
        <title>The trfB region of broad host range plasmid RK2: the nucleotide sequence reveals incC and key regulatory gene trfB/korA/korD as overlapping genes.</title>
        <authorList>
            <person name="Thomas C.M."/>
            <person name="Smith C.A."/>
        </authorList>
    </citation>
    <scope>NUCLEOTIDE SEQUENCE [GENOMIC DNA]</scope>
</reference>
<comment type="function">
    <text>In conjunction with KorB, inhibits the transcription of kilA, trfA and korAB operons. In conjunction with KorC is responsible for the negative control of kilC and kilE operons.</text>
</comment>
<comment type="interaction">
    <interactant intactId="EBI-6405477">
        <id>P03052</id>
    </interactant>
    <interactant intactId="EBI-6405482">
        <id>P07674</id>
        <label>korB</label>
    </interactant>
    <organismsDiffer>false</organismsDiffer>
    <experiments>2</experiments>
</comment>
<feature type="chain" id="PRO_0000068380" description="TrfB transcriptional repressor protein">
    <location>
        <begin position="1"/>
        <end position="101"/>
    </location>
</feature>
<feature type="DNA-binding region" description="H-T-H motif" evidence="1">
    <location>
        <begin position="37"/>
        <end position="56"/>
    </location>
</feature>
<feature type="helix" evidence="2">
    <location>
        <begin position="7"/>
        <end position="14"/>
    </location>
</feature>
<feature type="helix" evidence="2">
    <location>
        <begin position="21"/>
        <end position="31"/>
    </location>
</feature>
<feature type="helix" evidence="2">
    <location>
        <begin position="37"/>
        <end position="44"/>
    </location>
</feature>
<feature type="helix" evidence="2">
    <location>
        <begin position="48"/>
        <end position="64"/>
    </location>
</feature>
<feature type="strand" evidence="3">
    <location>
        <begin position="65"/>
        <end position="67"/>
    </location>
</feature>
<feature type="strand" evidence="2">
    <location>
        <begin position="71"/>
        <end position="78"/>
    </location>
</feature>
<feature type="helix" evidence="2">
    <location>
        <begin position="80"/>
        <end position="94"/>
    </location>
</feature>
<gene>
    <name type="primary">trfB</name>
    <name type="synonym">korA</name>
</gene>
<evidence type="ECO:0000255" key="1"/>
<evidence type="ECO:0007829" key="2">
    <source>
        <dbReference type="PDB" id="2W7N"/>
    </source>
</evidence>
<evidence type="ECO:0007829" key="3">
    <source>
        <dbReference type="PDB" id="5CLV"/>
    </source>
</evidence>
<organism>
    <name type="scientific">Escherichia coli</name>
    <dbReference type="NCBI Taxonomy" id="562"/>
    <lineage>
        <taxon>Bacteria</taxon>
        <taxon>Pseudomonadati</taxon>
        <taxon>Pseudomonadota</taxon>
        <taxon>Gammaproteobacteria</taxon>
        <taxon>Enterobacterales</taxon>
        <taxon>Enterobacteriaceae</taxon>
        <taxon>Escherichia</taxon>
    </lineage>
</organism>
<sequence length="101" mass="11306">MKKRLTESQFQEAIQGLEVGQQTIEIARGVLVDGKPQATFATSLGLTRGAVSQAVHRVWAAFEDKNLPEGYARVTAVLPEHQAYIVRKWEADAKKKQETKR</sequence>
<proteinExistence type="evidence at protein level"/>
<protein>
    <recommendedName>
        <fullName>TrfB transcriptional repressor protein</fullName>
    </recommendedName>
    <alternativeName>
        <fullName>Regulatory protein KorA</fullName>
    </alternativeName>
</protein>
<accession>P03052</accession>
<dbReference type="EMBL" id="X03962">
    <property type="protein sequence ID" value="CAA27596.1"/>
    <property type="molecule type" value="Genomic_DNA"/>
</dbReference>
<dbReference type="RefSeq" id="WP_011205830.1">
    <property type="nucleotide sequence ID" value="NZ_VMTS01000048.1"/>
</dbReference>
<dbReference type="PDB" id="2N5G">
    <property type="method" value="NMR"/>
    <property type="chains" value="A/B=1-101"/>
</dbReference>
<dbReference type="PDB" id="2W7N">
    <property type="method" value="X-ray"/>
    <property type="resolution" value="1.85 A"/>
    <property type="chains" value="A/B=1-101"/>
</dbReference>
<dbReference type="PDB" id="5CKT">
    <property type="method" value="X-ray"/>
    <property type="resolution" value="2.00 A"/>
    <property type="chains" value="A/B/C=1-99, D=1-101"/>
</dbReference>
<dbReference type="PDB" id="5CLV">
    <property type="method" value="X-ray"/>
    <property type="resolution" value="2.50 A"/>
    <property type="chains" value="A/B=2-97, E/F/I/J/M/N=2-66"/>
</dbReference>
<dbReference type="PDB" id="5CM3">
    <property type="method" value="X-ray"/>
    <property type="resolution" value="2.30 A"/>
    <property type="chains" value="A/B=1-97"/>
</dbReference>
<dbReference type="PDB" id="8QA9">
    <property type="method" value="X-ray"/>
    <property type="resolution" value="2.70 A"/>
    <property type="chains" value="C/D=1-101"/>
</dbReference>
<dbReference type="PDBsum" id="2N5G"/>
<dbReference type="PDBsum" id="2W7N"/>
<dbReference type="PDBsum" id="5CKT"/>
<dbReference type="PDBsum" id="5CLV"/>
<dbReference type="PDBsum" id="5CM3"/>
<dbReference type="PDBsum" id="8QA9"/>
<dbReference type="BMRB" id="P03052"/>
<dbReference type="SMR" id="P03052"/>
<dbReference type="DIP" id="DIP-27644N"/>
<dbReference type="IntAct" id="P03052">
    <property type="interactions" value="1"/>
</dbReference>
<dbReference type="EvolutionaryTrace" id="P03052"/>
<dbReference type="GO" id="GO:0003677">
    <property type="term" value="F:DNA binding"/>
    <property type="evidence" value="ECO:0007669"/>
    <property type="project" value="UniProtKB-KW"/>
</dbReference>
<dbReference type="Gene3D" id="1.10.10.2690">
    <property type="match status" value="1"/>
</dbReference>
<dbReference type="InterPro" id="IPR053721">
    <property type="entry name" value="Fimbrial_Adhesin_Reg"/>
</dbReference>
<dbReference type="InterPro" id="IPR032428">
    <property type="entry name" value="TrfB"/>
</dbReference>
<dbReference type="Pfam" id="PF16509">
    <property type="entry name" value="KORA"/>
    <property type="match status" value="1"/>
</dbReference>